<gene>
    <name evidence="1" type="primary">dnaK</name>
    <name type="ordered locus">spr0455</name>
</gene>
<keyword id="KW-0067">ATP-binding</keyword>
<keyword id="KW-0143">Chaperone</keyword>
<keyword id="KW-0547">Nucleotide-binding</keyword>
<keyword id="KW-0597">Phosphoprotein</keyword>
<keyword id="KW-1185">Reference proteome</keyword>
<keyword id="KW-0346">Stress response</keyword>
<dbReference type="EMBL" id="AE007317">
    <property type="protein sequence ID" value="AAK99259.1"/>
    <property type="molecule type" value="Genomic_DNA"/>
</dbReference>
<dbReference type="PIR" id="G97928">
    <property type="entry name" value="G97928"/>
</dbReference>
<dbReference type="RefSeq" id="NP_358049.1">
    <property type="nucleotide sequence ID" value="NC_003098.1"/>
</dbReference>
<dbReference type="RefSeq" id="WP_000034662.1">
    <property type="nucleotide sequence ID" value="NC_003098.1"/>
</dbReference>
<dbReference type="SMR" id="Q8CWT3"/>
<dbReference type="STRING" id="171101.spr0455"/>
<dbReference type="GeneID" id="45654055"/>
<dbReference type="KEGG" id="spr:spr0455"/>
<dbReference type="PATRIC" id="fig|171101.6.peg.502"/>
<dbReference type="eggNOG" id="COG0443">
    <property type="taxonomic scope" value="Bacteria"/>
</dbReference>
<dbReference type="HOGENOM" id="CLU_005965_2_4_9"/>
<dbReference type="Proteomes" id="UP000000586">
    <property type="component" value="Chromosome"/>
</dbReference>
<dbReference type="GO" id="GO:0005524">
    <property type="term" value="F:ATP binding"/>
    <property type="evidence" value="ECO:0007669"/>
    <property type="project" value="UniProtKB-UniRule"/>
</dbReference>
<dbReference type="GO" id="GO:0016887">
    <property type="term" value="F:ATP hydrolysis activity"/>
    <property type="evidence" value="ECO:0000318"/>
    <property type="project" value="GO_Central"/>
</dbReference>
<dbReference type="GO" id="GO:0140662">
    <property type="term" value="F:ATP-dependent protein folding chaperone"/>
    <property type="evidence" value="ECO:0007669"/>
    <property type="project" value="InterPro"/>
</dbReference>
<dbReference type="GO" id="GO:0031072">
    <property type="term" value="F:heat shock protein binding"/>
    <property type="evidence" value="ECO:0000318"/>
    <property type="project" value="GO_Central"/>
</dbReference>
<dbReference type="GO" id="GO:0044183">
    <property type="term" value="F:protein folding chaperone"/>
    <property type="evidence" value="ECO:0000318"/>
    <property type="project" value="GO_Central"/>
</dbReference>
<dbReference type="GO" id="GO:0051082">
    <property type="term" value="F:unfolded protein binding"/>
    <property type="evidence" value="ECO:0007669"/>
    <property type="project" value="InterPro"/>
</dbReference>
<dbReference type="GO" id="GO:0051085">
    <property type="term" value="P:chaperone cofactor-dependent protein refolding"/>
    <property type="evidence" value="ECO:0000318"/>
    <property type="project" value="GO_Central"/>
</dbReference>
<dbReference type="GO" id="GO:0042026">
    <property type="term" value="P:protein refolding"/>
    <property type="evidence" value="ECO:0000318"/>
    <property type="project" value="GO_Central"/>
</dbReference>
<dbReference type="CDD" id="cd10234">
    <property type="entry name" value="ASKHA_NBD_HSP70_DnaK-like"/>
    <property type="match status" value="1"/>
</dbReference>
<dbReference type="FunFam" id="2.60.34.10:FF:000014">
    <property type="entry name" value="Chaperone protein DnaK HSP70"/>
    <property type="match status" value="1"/>
</dbReference>
<dbReference type="FunFam" id="1.20.1270.10:FF:000004">
    <property type="entry name" value="Molecular chaperone DnaK"/>
    <property type="match status" value="1"/>
</dbReference>
<dbReference type="FunFam" id="3.30.420.40:FF:000071">
    <property type="entry name" value="Molecular chaperone DnaK"/>
    <property type="match status" value="1"/>
</dbReference>
<dbReference type="FunFam" id="3.90.640.10:FF:000003">
    <property type="entry name" value="Molecular chaperone DnaK"/>
    <property type="match status" value="1"/>
</dbReference>
<dbReference type="Gene3D" id="1.20.1270.10">
    <property type="match status" value="1"/>
</dbReference>
<dbReference type="Gene3D" id="3.30.420.40">
    <property type="match status" value="2"/>
</dbReference>
<dbReference type="Gene3D" id="3.90.640.10">
    <property type="entry name" value="Actin, Chain A, domain 4"/>
    <property type="match status" value="1"/>
</dbReference>
<dbReference type="Gene3D" id="2.60.34.10">
    <property type="entry name" value="Substrate Binding Domain Of DNAk, Chain A, domain 1"/>
    <property type="match status" value="1"/>
</dbReference>
<dbReference type="HAMAP" id="MF_00332">
    <property type="entry name" value="DnaK"/>
    <property type="match status" value="1"/>
</dbReference>
<dbReference type="InterPro" id="IPR043129">
    <property type="entry name" value="ATPase_NBD"/>
</dbReference>
<dbReference type="InterPro" id="IPR012725">
    <property type="entry name" value="Chaperone_DnaK"/>
</dbReference>
<dbReference type="InterPro" id="IPR018181">
    <property type="entry name" value="Heat_shock_70_CS"/>
</dbReference>
<dbReference type="InterPro" id="IPR029048">
    <property type="entry name" value="HSP70_C_sf"/>
</dbReference>
<dbReference type="InterPro" id="IPR029047">
    <property type="entry name" value="HSP70_peptide-bd_sf"/>
</dbReference>
<dbReference type="InterPro" id="IPR013126">
    <property type="entry name" value="Hsp_70_fam"/>
</dbReference>
<dbReference type="NCBIfam" id="NF001413">
    <property type="entry name" value="PRK00290.1"/>
    <property type="match status" value="1"/>
</dbReference>
<dbReference type="NCBIfam" id="TIGR02350">
    <property type="entry name" value="prok_dnaK"/>
    <property type="match status" value="1"/>
</dbReference>
<dbReference type="PANTHER" id="PTHR19375">
    <property type="entry name" value="HEAT SHOCK PROTEIN 70KDA"/>
    <property type="match status" value="1"/>
</dbReference>
<dbReference type="Pfam" id="PF00012">
    <property type="entry name" value="HSP70"/>
    <property type="match status" value="1"/>
</dbReference>
<dbReference type="PRINTS" id="PR00301">
    <property type="entry name" value="HEATSHOCK70"/>
</dbReference>
<dbReference type="SUPFAM" id="SSF53067">
    <property type="entry name" value="Actin-like ATPase domain"/>
    <property type="match status" value="2"/>
</dbReference>
<dbReference type="SUPFAM" id="SSF100934">
    <property type="entry name" value="Heat shock protein 70kD (HSP70), C-terminal subdomain"/>
    <property type="match status" value="1"/>
</dbReference>
<dbReference type="SUPFAM" id="SSF100920">
    <property type="entry name" value="Heat shock protein 70kD (HSP70), peptide-binding domain"/>
    <property type="match status" value="1"/>
</dbReference>
<dbReference type="PROSITE" id="PS00297">
    <property type="entry name" value="HSP70_1"/>
    <property type="match status" value="1"/>
</dbReference>
<dbReference type="PROSITE" id="PS00329">
    <property type="entry name" value="HSP70_2"/>
    <property type="match status" value="1"/>
</dbReference>
<dbReference type="PROSITE" id="PS01036">
    <property type="entry name" value="HSP70_3"/>
    <property type="match status" value="1"/>
</dbReference>
<reference key="1">
    <citation type="journal article" date="2001" name="J. Bacteriol.">
        <title>Genome of the bacterium Streptococcus pneumoniae strain R6.</title>
        <authorList>
            <person name="Hoskins J."/>
            <person name="Alborn W.E. Jr."/>
            <person name="Arnold J."/>
            <person name="Blaszczak L.C."/>
            <person name="Burgett S."/>
            <person name="DeHoff B.S."/>
            <person name="Estrem S.T."/>
            <person name="Fritz L."/>
            <person name="Fu D.-J."/>
            <person name="Fuller W."/>
            <person name="Geringer C."/>
            <person name="Gilmour R."/>
            <person name="Glass J.S."/>
            <person name="Khoja H."/>
            <person name="Kraft A.R."/>
            <person name="Lagace R.E."/>
            <person name="LeBlanc D.J."/>
            <person name="Lee L.N."/>
            <person name="Lefkowitz E.J."/>
            <person name="Lu J."/>
            <person name="Matsushima P."/>
            <person name="McAhren S.M."/>
            <person name="McHenney M."/>
            <person name="McLeaster K."/>
            <person name="Mundy C.W."/>
            <person name="Nicas T.I."/>
            <person name="Norris F.H."/>
            <person name="O'Gara M."/>
            <person name="Peery R.B."/>
            <person name="Robertson G.T."/>
            <person name="Rockey P."/>
            <person name="Sun P.-M."/>
            <person name="Winkler M.E."/>
            <person name="Yang Y."/>
            <person name="Young-Bellido M."/>
            <person name="Zhao G."/>
            <person name="Zook C.A."/>
            <person name="Baltz R.H."/>
            <person name="Jaskunas S.R."/>
            <person name="Rosteck P.R. Jr."/>
            <person name="Skatrud P.L."/>
            <person name="Glass J.I."/>
        </authorList>
    </citation>
    <scope>NUCLEOTIDE SEQUENCE [LARGE SCALE GENOMIC DNA]</scope>
    <source>
        <strain>ATCC BAA-255 / R6</strain>
    </source>
</reference>
<protein>
    <recommendedName>
        <fullName evidence="1">Chaperone protein DnaK</fullName>
    </recommendedName>
    <alternativeName>
        <fullName evidence="1">HSP70</fullName>
    </alternativeName>
    <alternativeName>
        <fullName evidence="1">Heat shock 70 kDa protein</fullName>
    </alternativeName>
    <alternativeName>
        <fullName evidence="1">Heat shock protein 70</fullName>
    </alternativeName>
</protein>
<name>DNAK_STRR6</name>
<evidence type="ECO:0000255" key="1">
    <source>
        <dbReference type="HAMAP-Rule" id="MF_00332"/>
    </source>
</evidence>
<evidence type="ECO:0000256" key="2">
    <source>
        <dbReference type="SAM" id="MobiDB-lite"/>
    </source>
</evidence>
<comment type="function">
    <text evidence="1">Acts as a chaperone.</text>
</comment>
<comment type="induction">
    <text evidence="1">By stress conditions e.g. heat shock.</text>
</comment>
<comment type="similarity">
    <text evidence="1">Belongs to the heat shock protein 70 family.</text>
</comment>
<proteinExistence type="inferred from homology"/>
<organism>
    <name type="scientific">Streptococcus pneumoniae (strain ATCC BAA-255 / R6)</name>
    <dbReference type="NCBI Taxonomy" id="171101"/>
    <lineage>
        <taxon>Bacteria</taxon>
        <taxon>Bacillati</taxon>
        <taxon>Bacillota</taxon>
        <taxon>Bacilli</taxon>
        <taxon>Lactobacillales</taxon>
        <taxon>Streptococcaceae</taxon>
        <taxon>Streptococcus</taxon>
    </lineage>
</organism>
<sequence>MSKIIGIDLGTTNSAVAVLEGTESKIIANPEGNRTTPSVVSFKNGEIIVGDAAKRQAVTNPDTVISIKSKMGTSEKVSANGKEYTPQEISAMILQYLKGYAEDYLGEKVTKAVITVPAYFNDAQRQATKDAGKIAGLEVERIVNEPTAAALAYGLDKTDKEEKILVFDLGGGTFDVSILELGDGVFDVLSTAGDNKLGGDDFDQKIIDHLVAEFKKENGIDLSTDKMAMQRLKDAAEKAKKDLSGVTSTQISLPFITAGEAGPLHLEMTLTRAKFDDLTRDLVERTKVPVRQALSDAGLSLSEIDEVILVGGSTRIPAVVEAVKAETGKEPNKSVNPDEVVAMGAAIQGGVITGDVKDVVLLDVTPLSLGIETMGGVFTKLIDRNTTIPTSKSQVFSTAADNQPAVDIHVLQGERPMAADNKTLGRFQLTDIPAAPRGIPQIEVTFDIDKNGIVSVKAKDLGTQKEQTIVIQSNSGLTDEEIDRMMKDAEANAEADKKRKEEVDLRNEVDQAIFATEKTIKETEGKGFDAERDAAQAALDDLKKAQEDNNLDDMKAKLEALNEKAQGLAVKLYEQAAAAQQAQEGAEGAQATGNAGDDVVDGEFTEK</sequence>
<accession>Q8CWT3</accession>
<feature type="chain" id="PRO_0000078554" description="Chaperone protein DnaK">
    <location>
        <begin position="1"/>
        <end position="607"/>
    </location>
</feature>
<feature type="region of interest" description="Disordered" evidence="2">
    <location>
        <begin position="580"/>
        <end position="607"/>
    </location>
</feature>
<feature type="compositionally biased region" description="Low complexity" evidence="2">
    <location>
        <begin position="580"/>
        <end position="591"/>
    </location>
</feature>
<feature type="compositionally biased region" description="Acidic residues" evidence="2">
    <location>
        <begin position="598"/>
        <end position="607"/>
    </location>
</feature>
<feature type="modified residue" description="Phosphothreonine; by autocatalysis" evidence="1">
    <location>
        <position position="173"/>
    </location>
</feature>